<sequence length="351" mass="39457">MGHRKLASPRRGSAGLRPRKRSSELLPTPRTWPQINSPNPKLLGFVGYKVGMSHVFMIDDWPNSPTNGKEIYMPVTVLEVPPIIPLALRAYAVDGKGEPNVITEYWSPSSLQFLDITRRIHSFSSFLKNDESKKKFEEKFGSKLDLIKSNLDRIVYFRLLVATQPRKIPSLGKKVPDLVEIQIGGGEKKAQLDYALNVLGKEISIKDVFKEGQLIDVVGVTKGKGFAGVIKRYSVVELPRWHKHRKGSRKIGTRGPSLGTPSYTPQPGQLGFHRRTEYNKRIIKIGDDPKEINPAGGFVRYGIVRNTYILLEGSILGSKKRPIFLREAVRPSYVFENAPKITYVNLLSKQG</sequence>
<comment type="function">
    <text evidence="1">One of the primary rRNA binding proteins, it binds directly near the 3'-end of the 23S rRNA, where it nucleates assembly of the 50S subunit.</text>
</comment>
<comment type="subunit">
    <text evidence="1">Part of the 50S ribosomal subunit. Forms a cluster with proteins L14 and L24e.</text>
</comment>
<comment type="similarity">
    <text evidence="1">Belongs to the universal ribosomal protein uL3 family.</text>
</comment>
<protein>
    <recommendedName>
        <fullName evidence="1">Large ribosomal subunit protein uL3</fullName>
    </recommendedName>
    <alternativeName>
        <fullName evidence="3">50S ribosomal protein L3</fullName>
    </alternativeName>
</protein>
<accession>C4KHF6</accession>
<feature type="chain" id="PRO_1000214522" description="Large ribosomal subunit protein uL3">
    <location>
        <begin position="1"/>
        <end position="351"/>
    </location>
</feature>
<feature type="region of interest" description="Disordered" evidence="2">
    <location>
        <begin position="1"/>
        <end position="31"/>
    </location>
</feature>
<feature type="region of interest" description="Disordered" evidence="2">
    <location>
        <begin position="246"/>
        <end position="271"/>
    </location>
</feature>
<proteinExistence type="inferred from homology"/>
<organism>
    <name type="scientific">Saccharolobus islandicus (strain M.16.4 / Kamchatka #3)</name>
    <name type="common">Sulfolobus islandicus</name>
    <dbReference type="NCBI Taxonomy" id="426118"/>
    <lineage>
        <taxon>Archaea</taxon>
        <taxon>Thermoproteota</taxon>
        <taxon>Thermoprotei</taxon>
        <taxon>Sulfolobales</taxon>
        <taxon>Sulfolobaceae</taxon>
        <taxon>Saccharolobus</taxon>
    </lineage>
</organism>
<keyword id="KW-0687">Ribonucleoprotein</keyword>
<keyword id="KW-0689">Ribosomal protein</keyword>
<keyword id="KW-0694">RNA-binding</keyword>
<keyword id="KW-0699">rRNA-binding</keyword>
<evidence type="ECO:0000255" key="1">
    <source>
        <dbReference type="HAMAP-Rule" id="MF_01325"/>
    </source>
</evidence>
<evidence type="ECO:0000256" key="2">
    <source>
        <dbReference type="SAM" id="MobiDB-lite"/>
    </source>
</evidence>
<evidence type="ECO:0000305" key="3"/>
<dbReference type="EMBL" id="CP001402">
    <property type="protein sequence ID" value="ACR42020.1"/>
    <property type="molecule type" value="Genomic_DNA"/>
</dbReference>
<dbReference type="RefSeq" id="WP_012711418.1">
    <property type="nucleotide sequence ID" value="NC_012726.1"/>
</dbReference>
<dbReference type="SMR" id="C4KHF6"/>
<dbReference type="GeneID" id="15297786"/>
<dbReference type="KEGG" id="sid:M164_1414"/>
<dbReference type="HOGENOM" id="CLU_033361_2_0_2"/>
<dbReference type="Proteomes" id="UP000001479">
    <property type="component" value="Chromosome"/>
</dbReference>
<dbReference type="GO" id="GO:0022625">
    <property type="term" value="C:cytosolic large ribosomal subunit"/>
    <property type="evidence" value="ECO:0007669"/>
    <property type="project" value="TreeGrafter"/>
</dbReference>
<dbReference type="GO" id="GO:0019843">
    <property type="term" value="F:rRNA binding"/>
    <property type="evidence" value="ECO:0007669"/>
    <property type="project" value="UniProtKB-UniRule"/>
</dbReference>
<dbReference type="GO" id="GO:0003735">
    <property type="term" value="F:structural constituent of ribosome"/>
    <property type="evidence" value="ECO:0007669"/>
    <property type="project" value="InterPro"/>
</dbReference>
<dbReference type="GO" id="GO:0006412">
    <property type="term" value="P:translation"/>
    <property type="evidence" value="ECO:0007669"/>
    <property type="project" value="UniProtKB-UniRule"/>
</dbReference>
<dbReference type="Gene3D" id="3.30.1430.10">
    <property type="match status" value="1"/>
</dbReference>
<dbReference type="Gene3D" id="4.10.960.10">
    <property type="entry name" value="Ribosomal protein L3, domain 3"/>
    <property type="match status" value="1"/>
</dbReference>
<dbReference type="Gene3D" id="2.40.30.10">
    <property type="entry name" value="Translation factors"/>
    <property type="match status" value="1"/>
</dbReference>
<dbReference type="HAMAP" id="MF_01325_A">
    <property type="entry name" value="Ribosomal_uL3_A"/>
    <property type="match status" value="1"/>
</dbReference>
<dbReference type="InterPro" id="IPR045077">
    <property type="entry name" value="L3_arc_euk"/>
</dbReference>
<dbReference type="InterPro" id="IPR044892">
    <property type="entry name" value="Ribosomal_L3_dom_3_arc_sf"/>
</dbReference>
<dbReference type="InterPro" id="IPR000597">
    <property type="entry name" value="Ribosomal_uL3"/>
</dbReference>
<dbReference type="InterPro" id="IPR019928">
    <property type="entry name" value="Ribosomal_uL3_arc"/>
</dbReference>
<dbReference type="InterPro" id="IPR019926">
    <property type="entry name" value="Ribosomal_uL3_CS"/>
</dbReference>
<dbReference type="InterPro" id="IPR009000">
    <property type="entry name" value="Transl_B-barrel_sf"/>
</dbReference>
<dbReference type="NCBIfam" id="TIGR03626">
    <property type="entry name" value="L3_arch"/>
    <property type="match status" value="1"/>
</dbReference>
<dbReference type="NCBIfam" id="NF003261">
    <property type="entry name" value="PRK04231.1"/>
    <property type="match status" value="1"/>
</dbReference>
<dbReference type="PANTHER" id="PTHR11363">
    <property type="entry name" value="60S RIBOSOMAL PROTEIN L3-RELATED"/>
    <property type="match status" value="1"/>
</dbReference>
<dbReference type="PANTHER" id="PTHR11363:SF5">
    <property type="entry name" value="LARGE RIBOSOMAL SUBUNIT PROTEIN UL3"/>
    <property type="match status" value="1"/>
</dbReference>
<dbReference type="Pfam" id="PF00297">
    <property type="entry name" value="Ribosomal_L3"/>
    <property type="match status" value="1"/>
</dbReference>
<dbReference type="SUPFAM" id="SSF50447">
    <property type="entry name" value="Translation proteins"/>
    <property type="match status" value="1"/>
</dbReference>
<dbReference type="PROSITE" id="PS00474">
    <property type="entry name" value="RIBOSOMAL_L3"/>
    <property type="match status" value="1"/>
</dbReference>
<name>RL3_SACI6</name>
<reference key="1">
    <citation type="journal article" date="2009" name="Proc. Natl. Acad. Sci. U.S.A.">
        <title>Biogeography of the Sulfolobus islandicus pan-genome.</title>
        <authorList>
            <person name="Reno M.L."/>
            <person name="Held N.L."/>
            <person name="Fields C.J."/>
            <person name="Burke P.V."/>
            <person name="Whitaker R.J."/>
        </authorList>
    </citation>
    <scope>NUCLEOTIDE SEQUENCE [LARGE SCALE GENOMIC DNA]</scope>
    <source>
        <strain>M.16.4 / Kamchatka #3</strain>
    </source>
</reference>
<gene>
    <name evidence="1" type="primary">rpl3</name>
    <name type="ordered locus">M164_1414</name>
</gene>